<evidence type="ECO:0000255" key="1">
    <source>
        <dbReference type="HAMAP-Rule" id="MF_01495"/>
    </source>
</evidence>
<dbReference type="EMBL" id="AP006715">
    <property type="protein sequence ID" value="BAE92447.1"/>
    <property type="molecule type" value="Genomic_DNA"/>
</dbReference>
<dbReference type="RefSeq" id="YP_537004.1">
    <property type="nucleotide sequence ID" value="NC_007932.1"/>
</dbReference>
<dbReference type="SMR" id="Q1XDG4"/>
<dbReference type="GeneID" id="3978958"/>
<dbReference type="GO" id="GO:0009535">
    <property type="term" value="C:chloroplast thylakoid membrane"/>
    <property type="evidence" value="ECO:0007669"/>
    <property type="project" value="UniProtKB-SubCell"/>
</dbReference>
<dbReference type="GO" id="GO:0009523">
    <property type="term" value="C:photosystem II"/>
    <property type="evidence" value="ECO:0007669"/>
    <property type="project" value="UniProtKB-KW"/>
</dbReference>
<dbReference type="GO" id="GO:0016168">
    <property type="term" value="F:chlorophyll binding"/>
    <property type="evidence" value="ECO:0007669"/>
    <property type="project" value="UniProtKB-UniRule"/>
</dbReference>
<dbReference type="GO" id="GO:0045156">
    <property type="term" value="F:electron transporter, transferring electrons within the cyclic electron transport pathway of photosynthesis activity"/>
    <property type="evidence" value="ECO:0007669"/>
    <property type="project" value="InterPro"/>
</dbReference>
<dbReference type="GO" id="GO:0009772">
    <property type="term" value="P:photosynthetic electron transport in photosystem II"/>
    <property type="evidence" value="ECO:0007669"/>
    <property type="project" value="InterPro"/>
</dbReference>
<dbReference type="Gene3D" id="3.10.680.10">
    <property type="entry name" value="Photosystem II CP47 reaction center protein"/>
    <property type="match status" value="1"/>
</dbReference>
<dbReference type="HAMAP" id="MF_01495">
    <property type="entry name" value="PSII_PsbB_CP47"/>
    <property type="match status" value="1"/>
</dbReference>
<dbReference type="InterPro" id="IPR000932">
    <property type="entry name" value="PS_antenna-like"/>
</dbReference>
<dbReference type="InterPro" id="IPR036001">
    <property type="entry name" value="PS_II_antenna-like_sf"/>
</dbReference>
<dbReference type="InterPro" id="IPR017486">
    <property type="entry name" value="PSII_PsbB"/>
</dbReference>
<dbReference type="NCBIfam" id="TIGR03039">
    <property type="entry name" value="PS_II_CP47"/>
    <property type="match status" value="1"/>
</dbReference>
<dbReference type="Pfam" id="PF00421">
    <property type="entry name" value="PSII"/>
    <property type="match status" value="1"/>
</dbReference>
<dbReference type="SUPFAM" id="SSF161077">
    <property type="entry name" value="Photosystem II antenna protein-like"/>
    <property type="match status" value="1"/>
</dbReference>
<proteinExistence type="inferred from homology"/>
<feature type="chain" id="PRO_0000295864" description="Photosystem II CP47 reaction center protein">
    <location>
        <begin position="1"/>
        <end position="509"/>
    </location>
</feature>
<feature type="transmembrane region" description="Helical" evidence="1">
    <location>
        <begin position="21"/>
        <end position="36"/>
    </location>
</feature>
<feature type="transmembrane region" description="Helical" evidence="1">
    <location>
        <begin position="101"/>
        <end position="115"/>
    </location>
</feature>
<feature type="transmembrane region" description="Helical" evidence="1">
    <location>
        <begin position="140"/>
        <end position="156"/>
    </location>
</feature>
<feature type="transmembrane region" description="Helical" evidence="1">
    <location>
        <begin position="203"/>
        <end position="218"/>
    </location>
</feature>
<feature type="transmembrane region" description="Helical" evidence="1">
    <location>
        <begin position="237"/>
        <end position="252"/>
    </location>
</feature>
<feature type="transmembrane region" description="Helical" evidence="1">
    <location>
        <begin position="457"/>
        <end position="472"/>
    </location>
</feature>
<protein>
    <recommendedName>
        <fullName evidence="1">Photosystem II CP47 reaction center protein</fullName>
    </recommendedName>
    <alternativeName>
        <fullName evidence="1">PSII 47 kDa protein</fullName>
    </alternativeName>
    <alternativeName>
        <fullName evidence="1">Protein CP-47</fullName>
    </alternativeName>
</protein>
<organism>
    <name type="scientific">Pyropia yezoensis</name>
    <name type="common">Susabi-nori</name>
    <name type="synonym">Porphyra yezoensis</name>
    <dbReference type="NCBI Taxonomy" id="2788"/>
    <lineage>
        <taxon>Eukaryota</taxon>
        <taxon>Rhodophyta</taxon>
        <taxon>Bangiophyceae</taxon>
        <taxon>Bangiales</taxon>
        <taxon>Bangiaceae</taxon>
        <taxon>Pyropia</taxon>
    </lineage>
</organism>
<sequence length="509" mass="56100">MGLPWYRVHTVVLNDPGRLIAVHLMHTALVAGWAGSMALYELAVFDPSDPVLNPMWRQGMFVMPFMARLGVTDSWGGWSITGESVSNPGLWSFEGVALTHIVLSGMLFLAAIWHWVYWDLELFRDPRTGEPALDLPKIFGIHLLLSSLLCFGFGAFHVTGLFGPGMWVSDGYGVTGKVLPVAPAWGPEGFNPFNPGGVASHHIAAGTVGILAGVFHLTVRPPQRLYRALRMGNIETVLSSSISAVFFSAFVTCGTMWYGSATTPIELFGPTRYQWDSGYFQQEIEKRVENAIADGAAPSEAWSRIPDKLAFYDYIGNNPAKGGLFRAGPMNKGDGVAEAWLGHPVFQDKEGRELSVRRMPAFFETFPVILVDKDGIIRADIPFRRAESKYSIEQVGVTASFYGGKLNGQVFNDAPSVKKYARKAQLGEVFEFDRTTLESDGVFRSSPRGWFTFGHANFALIFFFGHLWHGSRTIFRDVFAGIGAEVTEQVEFGAFQKLGDRSSKKQGAV</sequence>
<name>PSBB_PYRYE</name>
<comment type="function">
    <text evidence="1">One of the components of the core complex of photosystem II (PSII). It binds chlorophyll and helps catalyze the primary light-induced photochemical processes of PSII. PSII is a light-driven water:plastoquinone oxidoreductase, using light energy to abstract electrons from H(2)O, generating O(2) and a proton gradient subsequently used for ATP formation.</text>
</comment>
<comment type="cofactor">
    <text evidence="1">Binds multiple chlorophylls. PSII binds additional chlorophylls, carotenoids and specific lipids.</text>
</comment>
<comment type="subunit">
    <text evidence="1">PSII is composed of 1 copy each of membrane proteins PsbA, PsbB, PsbC, PsbD, PsbE, PsbF, PsbH, PsbI, PsbJ, PsbK, PsbL, PsbM, PsbT, PsbX, PsbY, PsbZ, Psb30/Ycf12, at least 3 peripheral proteins of the oxygen-evolving complex and a large number of cofactors. It forms dimeric complexes.</text>
</comment>
<comment type="subcellular location">
    <subcellularLocation>
        <location evidence="1">Plastid</location>
        <location evidence="1">Chloroplast thylakoid membrane</location>
        <topology evidence="1">Multi-pass membrane protein</topology>
    </subcellularLocation>
</comment>
<comment type="similarity">
    <text evidence="1">Belongs to the PsbB/PsbC family. PsbB subfamily.</text>
</comment>
<keyword id="KW-0148">Chlorophyll</keyword>
<keyword id="KW-0150">Chloroplast</keyword>
<keyword id="KW-0157">Chromophore</keyword>
<keyword id="KW-0472">Membrane</keyword>
<keyword id="KW-0602">Photosynthesis</keyword>
<keyword id="KW-0604">Photosystem II</keyword>
<keyword id="KW-0934">Plastid</keyword>
<keyword id="KW-0793">Thylakoid</keyword>
<keyword id="KW-0812">Transmembrane</keyword>
<keyword id="KW-1133">Transmembrane helix</keyword>
<accession>Q1XDG4</accession>
<gene>
    <name evidence="1" type="primary">psbB</name>
</gene>
<reference key="1">
    <citation type="submission" date="2003-11" db="EMBL/GenBank/DDBJ databases">
        <title>Whole genome sequence of Porphyra yezoensis chloroplast.</title>
        <authorList>
            <person name="Kunimoto M."/>
            <person name="Morishima K."/>
            <person name="Yoshikawa M."/>
            <person name="Fukuda S."/>
            <person name="Kobayashi T."/>
            <person name="Kobayashi M."/>
            <person name="Okazaki T."/>
            <person name="Ohara I."/>
            <person name="Nakayama I."/>
        </authorList>
    </citation>
    <scope>NUCLEOTIDE SEQUENCE [LARGE SCALE GENOMIC DNA]</scope>
    <source>
        <strain>U-51</strain>
    </source>
</reference>
<geneLocation type="chloroplast"/>